<comment type="function">
    <text evidence="1">Tetrapolymerization of the monopyrrole PBG into the hydroxymethylbilane pre-uroporphyrinogen in several discrete steps.</text>
</comment>
<comment type="catalytic activity">
    <reaction evidence="1">
        <text>4 porphobilinogen + H2O = hydroxymethylbilane + 4 NH4(+)</text>
        <dbReference type="Rhea" id="RHEA:13185"/>
        <dbReference type="ChEBI" id="CHEBI:15377"/>
        <dbReference type="ChEBI" id="CHEBI:28938"/>
        <dbReference type="ChEBI" id="CHEBI:57845"/>
        <dbReference type="ChEBI" id="CHEBI:58126"/>
        <dbReference type="EC" id="2.5.1.61"/>
    </reaction>
</comment>
<comment type="cofactor">
    <cofactor evidence="1">
        <name>dipyrromethane</name>
        <dbReference type="ChEBI" id="CHEBI:60342"/>
    </cofactor>
    <text evidence="1">Binds 1 dipyrromethane group covalently.</text>
</comment>
<comment type="pathway">
    <text evidence="1">Porphyrin-containing compound metabolism; protoporphyrin-IX biosynthesis; coproporphyrinogen-III from 5-aminolevulinate: step 2/4.</text>
</comment>
<comment type="subunit">
    <text evidence="1">Monomer.</text>
</comment>
<comment type="miscellaneous">
    <text evidence="1">The porphobilinogen subunits are added to the dipyrromethane group.</text>
</comment>
<comment type="similarity">
    <text evidence="1">Belongs to the HMBS family.</text>
</comment>
<organism>
    <name type="scientific">Caulobacter vibrioides (strain ATCC 19089 / CIP 103742 / CB 15)</name>
    <name type="common">Caulobacter crescentus</name>
    <dbReference type="NCBI Taxonomy" id="190650"/>
    <lineage>
        <taxon>Bacteria</taxon>
        <taxon>Pseudomonadati</taxon>
        <taxon>Pseudomonadota</taxon>
        <taxon>Alphaproteobacteria</taxon>
        <taxon>Caulobacterales</taxon>
        <taxon>Caulobacteraceae</taxon>
        <taxon>Caulobacter</taxon>
    </lineage>
</organism>
<evidence type="ECO:0000255" key="1">
    <source>
        <dbReference type="HAMAP-Rule" id="MF_00260"/>
    </source>
</evidence>
<keyword id="KW-0627">Porphyrin biosynthesis</keyword>
<keyword id="KW-1185">Reference proteome</keyword>
<keyword id="KW-0808">Transferase</keyword>
<dbReference type="EC" id="2.5.1.61" evidence="1"/>
<dbReference type="EMBL" id="AE005673">
    <property type="protein sequence ID" value="AAK22059.1"/>
    <property type="molecule type" value="Genomic_DNA"/>
</dbReference>
<dbReference type="PIR" id="G87257">
    <property type="entry name" value="G87257"/>
</dbReference>
<dbReference type="RefSeq" id="NP_418891.1">
    <property type="nucleotide sequence ID" value="NC_002696.2"/>
</dbReference>
<dbReference type="RefSeq" id="WP_010917961.1">
    <property type="nucleotide sequence ID" value="NC_002696.2"/>
</dbReference>
<dbReference type="SMR" id="Q9ABZ8"/>
<dbReference type="STRING" id="190650.CC_0072"/>
<dbReference type="EnsemblBacteria" id="AAK22059">
    <property type="protein sequence ID" value="AAK22059"/>
    <property type="gene ID" value="CC_0072"/>
</dbReference>
<dbReference type="KEGG" id="ccr:CC_0072"/>
<dbReference type="PATRIC" id="fig|190650.5.peg.69"/>
<dbReference type="eggNOG" id="COG0181">
    <property type="taxonomic scope" value="Bacteria"/>
</dbReference>
<dbReference type="HOGENOM" id="CLU_019704_1_2_5"/>
<dbReference type="BioCyc" id="CAULO:CC0072-MONOMER"/>
<dbReference type="UniPathway" id="UPA00251">
    <property type="reaction ID" value="UER00319"/>
</dbReference>
<dbReference type="Proteomes" id="UP000001816">
    <property type="component" value="Chromosome"/>
</dbReference>
<dbReference type="GO" id="GO:0005737">
    <property type="term" value="C:cytoplasm"/>
    <property type="evidence" value="ECO:0007669"/>
    <property type="project" value="TreeGrafter"/>
</dbReference>
<dbReference type="GO" id="GO:0004418">
    <property type="term" value="F:hydroxymethylbilane synthase activity"/>
    <property type="evidence" value="ECO:0007669"/>
    <property type="project" value="UniProtKB-UniRule"/>
</dbReference>
<dbReference type="GO" id="GO:0006782">
    <property type="term" value="P:protoporphyrinogen IX biosynthetic process"/>
    <property type="evidence" value="ECO:0007669"/>
    <property type="project" value="UniProtKB-UniRule"/>
</dbReference>
<dbReference type="FunFam" id="3.40.190.10:FF:000005">
    <property type="entry name" value="Porphobilinogen deaminase"/>
    <property type="match status" value="1"/>
</dbReference>
<dbReference type="Gene3D" id="3.40.190.10">
    <property type="entry name" value="Periplasmic binding protein-like II"/>
    <property type="match status" value="2"/>
</dbReference>
<dbReference type="Gene3D" id="3.30.160.40">
    <property type="entry name" value="Porphobilinogen deaminase, C-terminal domain"/>
    <property type="match status" value="1"/>
</dbReference>
<dbReference type="HAMAP" id="MF_00260">
    <property type="entry name" value="Porphobil_deam"/>
    <property type="match status" value="1"/>
</dbReference>
<dbReference type="InterPro" id="IPR000860">
    <property type="entry name" value="HemC"/>
</dbReference>
<dbReference type="InterPro" id="IPR022419">
    <property type="entry name" value="Porphobilin_deaminase_cofac_BS"/>
</dbReference>
<dbReference type="InterPro" id="IPR022417">
    <property type="entry name" value="Porphobilin_deaminase_N"/>
</dbReference>
<dbReference type="InterPro" id="IPR022418">
    <property type="entry name" value="Porphobilinogen_deaminase_C"/>
</dbReference>
<dbReference type="InterPro" id="IPR036803">
    <property type="entry name" value="Porphobilinogen_deaminase_C_sf"/>
</dbReference>
<dbReference type="NCBIfam" id="TIGR00212">
    <property type="entry name" value="hemC"/>
    <property type="match status" value="1"/>
</dbReference>
<dbReference type="PANTHER" id="PTHR11557">
    <property type="entry name" value="PORPHOBILINOGEN DEAMINASE"/>
    <property type="match status" value="1"/>
</dbReference>
<dbReference type="PANTHER" id="PTHR11557:SF0">
    <property type="entry name" value="PORPHOBILINOGEN DEAMINASE"/>
    <property type="match status" value="1"/>
</dbReference>
<dbReference type="Pfam" id="PF01379">
    <property type="entry name" value="Porphobil_deam"/>
    <property type="match status" value="1"/>
</dbReference>
<dbReference type="Pfam" id="PF03900">
    <property type="entry name" value="Porphobil_deamC"/>
    <property type="match status" value="1"/>
</dbReference>
<dbReference type="PIRSF" id="PIRSF001438">
    <property type="entry name" value="4pyrrol_synth_OHMeBilane_synth"/>
    <property type="match status" value="1"/>
</dbReference>
<dbReference type="PRINTS" id="PR00151">
    <property type="entry name" value="PORPHBDMNASE"/>
</dbReference>
<dbReference type="SUPFAM" id="SSF53850">
    <property type="entry name" value="Periplasmic binding protein-like II"/>
    <property type="match status" value="1"/>
</dbReference>
<dbReference type="SUPFAM" id="SSF54782">
    <property type="entry name" value="Porphobilinogen deaminase (hydroxymethylbilane synthase), C-terminal domain"/>
    <property type="match status" value="1"/>
</dbReference>
<dbReference type="PROSITE" id="PS00533">
    <property type="entry name" value="PORPHOBILINOGEN_DEAM"/>
    <property type="match status" value="1"/>
</dbReference>
<proteinExistence type="inferred from homology"/>
<protein>
    <recommendedName>
        <fullName evidence="1">Porphobilinogen deaminase</fullName>
        <shortName evidence="1">PBG</shortName>
        <ecNumber evidence="1">2.5.1.61</ecNumber>
    </recommendedName>
    <alternativeName>
        <fullName evidence="1">Hydroxymethylbilane synthase</fullName>
        <shortName evidence="1">HMBS</shortName>
    </alternativeName>
    <alternativeName>
        <fullName evidence="1">Pre-uroporphyrinogen synthase</fullName>
    </alternativeName>
</protein>
<name>HEM3_CAUVC</name>
<sequence>MSRQPPIRIGARGSKLSLAQSGLMQARIAHALGVPAGASKDEIEAAAPLIPIVTSGDRIQDRRLMEIGGKGLFTKEIEEALLDGRIDCAVHSLKDMPAELPPGLVLAATPEREDPRDAFISHVCERLEDLPKGARLGTASLRRQAQALHVRPDLEIVMLRGNVDTRLAKLERGEADAILLAQSGLNRLGLGHLTRSWLDPDACPPAPGQGALVIETRAEDIGAPWLEAVRCRQTTIAVAAERGALLALEGSCRTAIGARAILDGARLSMIVEALTPDGAQRFRREGDITLTGADDIAEARAFGLTLGAEVRAAGGDAIILPE</sequence>
<gene>
    <name evidence="1" type="primary">hemC</name>
    <name type="ordered locus">CC_0072</name>
</gene>
<feature type="chain" id="PRO_0000142921" description="Porphobilinogen deaminase">
    <location>
        <begin position="1"/>
        <end position="322"/>
    </location>
</feature>
<feature type="modified residue" description="S-(dipyrrolylmethanemethyl)cysteine" evidence="1">
    <location>
        <position position="252"/>
    </location>
</feature>
<accession>Q9ABZ8</accession>
<reference key="1">
    <citation type="journal article" date="2001" name="Proc. Natl. Acad. Sci. U.S.A.">
        <title>Complete genome sequence of Caulobacter crescentus.</title>
        <authorList>
            <person name="Nierman W.C."/>
            <person name="Feldblyum T.V."/>
            <person name="Laub M.T."/>
            <person name="Paulsen I.T."/>
            <person name="Nelson K.E."/>
            <person name="Eisen J.A."/>
            <person name="Heidelberg J.F."/>
            <person name="Alley M.R.K."/>
            <person name="Ohta N."/>
            <person name="Maddock J.R."/>
            <person name="Potocka I."/>
            <person name="Nelson W.C."/>
            <person name="Newton A."/>
            <person name="Stephens C."/>
            <person name="Phadke N.D."/>
            <person name="Ely B."/>
            <person name="DeBoy R.T."/>
            <person name="Dodson R.J."/>
            <person name="Durkin A.S."/>
            <person name="Gwinn M.L."/>
            <person name="Haft D.H."/>
            <person name="Kolonay J.F."/>
            <person name="Smit J."/>
            <person name="Craven M.B."/>
            <person name="Khouri H.M."/>
            <person name="Shetty J."/>
            <person name="Berry K.J."/>
            <person name="Utterback T.R."/>
            <person name="Tran K."/>
            <person name="Wolf A.M."/>
            <person name="Vamathevan J.J."/>
            <person name="Ermolaeva M.D."/>
            <person name="White O."/>
            <person name="Salzberg S.L."/>
            <person name="Venter J.C."/>
            <person name="Shapiro L."/>
            <person name="Fraser C.M."/>
        </authorList>
    </citation>
    <scope>NUCLEOTIDE SEQUENCE [LARGE SCALE GENOMIC DNA]</scope>
    <source>
        <strain>ATCC 19089 / CIP 103742 / CB 15</strain>
    </source>
</reference>